<name>RL20_FRACC</name>
<evidence type="ECO:0000255" key="1">
    <source>
        <dbReference type="HAMAP-Rule" id="MF_00382"/>
    </source>
</evidence>
<evidence type="ECO:0000305" key="2"/>
<reference key="1">
    <citation type="journal article" date="2007" name="Genome Res.">
        <title>Genome characteristics of facultatively symbiotic Frankia sp. strains reflect host range and host plant biogeography.</title>
        <authorList>
            <person name="Normand P."/>
            <person name="Lapierre P."/>
            <person name="Tisa L.S."/>
            <person name="Gogarten J.P."/>
            <person name="Alloisio N."/>
            <person name="Bagnarol E."/>
            <person name="Bassi C.A."/>
            <person name="Berry A.M."/>
            <person name="Bickhart D.M."/>
            <person name="Choisne N."/>
            <person name="Couloux A."/>
            <person name="Cournoyer B."/>
            <person name="Cruveiller S."/>
            <person name="Daubin V."/>
            <person name="Demange N."/>
            <person name="Francino M.P."/>
            <person name="Goltsman E."/>
            <person name="Huang Y."/>
            <person name="Kopp O.R."/>
            <person name="Labarre L."/>
            <person name="Lapidus A."/>
            <person name="Lavire C."/>
            <person name="Marechal J."/>
            <person name="Martinez M."/>
            <person name="Mastronunzio J.E."/>
            <person name="Mullin B.C."/>
            <person name="Niemann J."/>
            <person name="Pujic P."/>
            <person name="Rawnsley T."/>
            <person name="Rouy Z."/>
            <person name="Schenowitz C."/>
            <person name="Sellstedt A."/>
            <person name="Tavares F."/>
            <person name="Tomkins J.P."/>
            <person name="Vallenet D."/>
            <person name="Valverde C."/>
            <person name="Wall L.G."/>
            <person name="Wang Y."/>
            <person name="Medigue C."/>
            <person name="Benson D.R."/>
        </authorList>
    </citation>
    <scope>NUCLEOTIDE SEQUENCE [LARGE SCALE GENOMIC DNA]</scope>
    <source>
        <strain>DSM 45818 / CECT 9043 / HFP020203 / CcI3</strain>
    </source>
</reference>
<organism>
    <name type="scientific">Frankia casuarinae (strain DSM 45818 / CECT 9043 / HFP020203 / CcI3)</name>
    <dbReference type="NCBI Taxonomy" id="106370"/>
    <lineage>
        <taxon>Bacteria</taxon>
        <taxon>Bacillati</taxon>
        <taxon>Actinomycetota</taxon>
        <taxon>Actinomycetes</taxon>
        <taxon>Frankiales</taxon>
        <taxon>Frankiaceae</taxon>
        <taxon>Frankia</taxon>
    </lineage>
</organism>
<keyword id="KW-1185">Reference proteome</keyword>
<keyword id="KW-0687">Ribonucleoprotein</keyword>
<keyword id="KW-0689">Ribosomal protein</keyword>
<keyword id="KW-0694">RNA-binding</keyword>
<keyword id="KW-0699">rRNA-binding</keyword>
<dbReference type="EMBL" id="CP000249">
    <property type="protein sequence ID" value="ABD12537.1"/>
    <property type="molecule type" value="Genomic_DNA"/>
</dbReference>
<dbReference type="RefSeq" id="WP_011437565.1">
    <property type="nucleotide sequence ID" value="NZ_LRTJ01000064.1"/>
</dbReference>
<dbReference type="SMR" id="Q2J855"/>
<dbReference type="STRING" id="106370.Francci3_3180"/>
<dbReference type="KEGG" id="fra:Francci3_3180"/>
<dbReference type="eggNOG" id="COG0292">
    <property type="taxonomic scope" value="Bacteria"/>
</dbReference>
<dbReference type="HOGENOM" id="CLU_123265_0_0_11"/>
<dbReference type="OrthoDB" id="9808966at2"/>
<dbReference type="PhylomeDB" id="Q2J855"/>
<dbReference type="Proteomes" id="UP000001937">
    <property type="component" value="Chromosome"/>
</dbReference>
<dbReference type="GO" id="GO:1990904">
    <property type="term" value="C:ribonucleoprotein complex"/>
    <property type="evidence" value="ECO:0007669"/>
    <property type="project" value="UniProtKB-KW"/>
</dbReference>
<dbReference type="GO" id="GO:0005840">
    <property type="term" value="C:ribosome"/>
    <property type="evidence" value="ECO:0007669"/>
    <property type="project" value="UniProtKB-KW"/>
</dbReference>
<dbReference type="GO" id="GO:0019843">
    <property type="term" value="F:rRNA binding"/>
    <property type="evidence" value="ECO:0007669"/>
    <property type="project" value="UniProtKB-UniRule"/>
</dbReference>
<dbReference type="GO" id="GO:0003735">
    <property type="term" value="F:structural constituent of ribosome"/>
    <property type="evidence" value="ECO:0007669"/>
    <property type="project" value="InterPro"/>
</dbReference>
<dbReference type="GO" id="GO:0000027">
    <property type="term" value="P:ribosomal large subunit assembly"/>
    <property type="evidence" value="ECO:0007669"/>
    <property type="project" value="UniProtKB-UniRule"/>
</dbReference>
<dbReference type="GO" id="GO:0006412">
    <property type="term" value="P:translation"/>
    <property type="evidence" value="ECO:0007669"/>
    <property type="project" value="InterPro"/>
</dbReference>
<dbReference type="CDD" id="cd07026">
    <property type="entry name" value="Ribosomal_L20"/>
    <property type="match status" value="1"/>
</dbReference>
<dbReference type="FunFam" id="1.10.1900.20:FF:000001">
    <property type="entry name" value="50S ribosomal protein L20"/>
    <property type="match status" value="1"/>
</dbReference>
<dbReference type="Gene3D" id="6.10.160.10">
    <property type="match status" value="1"/>
</dbReference>
<dbReference type="Gene3D" id="1.10.1900.20">
    <property type="entry name" value="Ribosomal protein L20"/>
    <property type="match status" value="1"/>
</dbReference>
<dbReference type="HAMAP" id="MF_00382">
    <property type="entry name" value="Ribosomal_bL20"/>
    <property type="match status" value="1"/>
</dbReference>
<dbReference type="InterPro" id="IPR005813">
    <property type="entry name" value="Ribosomal_bL20"/>
</dbReference>
<dbReference type="InterPro" id="IPR049946">
    <property type="entry name" value="RIBOSOMAL_L20_CS"/>
</dbReference>
<dbReference type="InterPro" id="IPR035566">
    <property type="entry name" value="Ribosomal_protein_bL20_C"/>
</dbReference>
<dbReference type="NCBIfam" id="TIGR01032">
    <property type="entry name" value="rplT_bact"/>
    <property type="match status" value="1"/>
</dbReference>
<dbReference type="PANTHER" id="PTHR10986">
    <property type="entry name" value="39S RIBOSOMAL PROTEIN L20"/>
    <property type="match status" value="1"/>
</dbReference>
<dbReference type="Pfam" id="PF00453">
    <property type="entry name" value="Ribosomal_L20"/>
    <property type="match status" value="1"/>
</dbReference>
<dbReference type="PRINTS" id="PR00062">
    <property type="entry name" value="RIBOSOMALL20"/>
</dbReference>
<dbReference type="SUPFAM" id="SSF74731">
    <property type="entry name" value="Ribosomal protein L20"/>
    <property type="match status" value="1"/>
</dbReference>
<dbReference type="PROSITE" id="PS00937">
    <property type="entry name" value="RIBOSOMAL_L20"/>
    <property type="match status" value="1"/>
</dbReference>
<gene>
    <name evidence="1" type="primary">rplT</name>
    <name type="ordered locus">Francci3_3180</name>
</gene>
<feature type="chain" id="PRO_0000243683" description="Large ribosomal subunit protein bL20">
    <location>
        <begin position="1"/>
        <end position="126"/>
    </location>
</feature>
<sequence length="126" mass="14178">MARVKRAVNAQKKRRTVLEQASGYRGQRSRLYRKAKEQMLHSMTYSYRDRRARKGDFRQLWITRINAAARANGLTYNRFVQGLKLSGVEVDRKILADLAVNDAVAFTALVEVARAALAAAPEPTAA</sequence>
<protein>
    <recommendedName>
        <fullName evidence="1">Large ribosomal subunit protein bL20</fullName>
    </recommendedName>
    <alternativeName>
        <fullName evidence="2">50S ribosomal protein L20</fullName>
    </alternativeName>
</protein>
<comment type="function">
    <text evidence="1">Binds directly to 23S ribosomal RNA and is necessary for the in vitro assembly process of the 50S ribosomal subunit. It is not involved in the protein synthesizing functions of that subunit.</text>
</comment>
<comment type="similarity">
    <text evidence="1">Belongs to the bacterial ribosomal protein bL20 family.</text>
</comment>
<accession>Q2J855</accession>
<proteinExistence type="inferred from homology"/>